<feature type="chain" id="PRO_1000126882" description="Large ribosomal subunit protein bL9">
    <location>
        <begin position="1"/>
        <end position="150"/>
    </location>
</feature>
<sequence length="150" mass="16030">MQIILLEKVVNLGNLGDIVKVKDGYARNFLIPNKQARRATKEALAEFEVRRAELEKIAAEKLAAATAQGEKLGGSTVQINQKAGVDGRLFGSVTNADIAEALVKQGFAVEKAQVRLPEGPLKLVGEHAVQVSLHTDVVVDVTVAVIGEHV</sequence>
<gene>
    <name evidence="1" type="primary">rplI</name>
    <name type="ordered locus">Bphyt_1789</name>
</gene>
<name>RL9_PARPJ</name>
<dbReference type="EMBL" id="CP001052">
    <property type="protein sequence ID" value="ACD16197.1"/>
    <property type="molecule type" value="Genomic_DNA"/>
</dbReference>
<dbReference type="RefSeq" id="WP_012432803.1">
    <property type="nucleotide sequence ID" value="NC_010681.1"/>
</dbReference>
<dbReference type="SMR" id="B2T3N6"/>
<dbReference type="STRING" id="398527.Bphyt_1789"/>
<dbReference type="KEGG" id="bpy:Bphyt_1789"/>
<dbReference type="eggNOG" id="COG0359">
    <property type="taxonomic scope" value="Bacteria"/>
</dbReference>
<dbReference type="HOGENOM" id="CLU_078938_4_1_4"/>
<dbReference type="OrthoDB" id="9788336at2"/>
<dbReference type="Proteomes" id="UP000001739">
    <property type="component" value="Chromosome 1"/>
</dbReference>
<dbReference type="GO" id="GO:1990904">
    <property type="term" value="C:ribonucleoprotein complex"/>
    <property type="evidence" value="ECO:0007669"/>
    <property type="project" value="UniProtKB-KW"/>
</dbReference>
<dbReference type="GO" id="GO:0005840">
    <property type="term" value="C:ribosome"/>
    <property type="evidence" value="ECO:0007669"/>
    <property type="project" value="UniProtKB-KW"/>
</dbReference>
<dbReference type="GO" id="GO:0019843">
    <property type="term" value="F:rRNA binding"/>
    <property type="evidence" value="ECO:0007669"/>
    <property type="project" value="UniProtKB-UniRule"/>
</dbReference>
<dbReference type="GO" id="GO:0003735">
    <property type="term" value="F:structural constituent of ribosome"/>
    <property type="evidence" value="ECO:0007669"/>
    <property type="project" value="InterPro"/>
</dbReference>
<dbReference type="GO" id="GO:0006412">
    <property type="term" value="P:translation"/>
    <property type="evidence" value="ECO:0007669"/>
    <property type="project" value="UniProtKB-UniRule"/>
</dbReference>
<dbReference type="Gene3D" id="3.10.430.100">
    <property type="entry name" value="Ribosomal protein L9, C-terminal domain"/>
    <property type="match status" value="1"/>
</dbReference>
<dbReference type="Gene3D" id="3.40.5.10">
    <property type="entry name" value="Ribosomal protein L9, N-terminal domain"/>
    <property type="match status" value="1"/>
</dbReference>
<dbReference type="HAMAP" id="MF_00503">
    <property type="entry name" value="Ribosomal_bL9"/>
    <property type="match status" value="1"/>
</dbReference>
<dbReference type="InterPro" id="IPR000244">
    <property type="entry name" value="Ribosomal_bL9"/>
</dbReference>
<dbReference type="InterPro" id="IPR009027">
    <property type="entry name" value="Ribosomal_bL9/RNase_H1_N"/>
</dbReference>
<dbReference type="InterPro" id="IPR020594">
    <property type="entry name" value="Ribosomal_bL9_bac/chp"/>
</dbReference>
<dbReference type="InterPro" id="IPR020069">
    <property type="entry name" value="Ribosomal_bL9_C"/>
</dbReference>
<dbReference type="InterPro" id="IPR036791">
    <property type="entry name" value="Ribosomal_bL9_C_sf"/>
</dbReference>
<dbReference type="InterPro" id="IPR020070">
    <property type="entry name" value="Ribosomal_bL9_N"/>
</dbReference>
<dbReference type="InterPro" id="IPR036935">
    <property type="entry name" value="Ribosomal_bL9_N_sf"/>
</dbReference>
<dbReference type="NCBIfam" id="TIGR00158">
    <property type="entry name" value="L9"/>
    <property type="match status" value="1"/>
</dbReference>
<dbReference type="PANTHER" id="PTHR21368">
    <property type="entry name" value="50S RIBOSOMAL PROTEIN L9"/>
    <property type="match status" value="1"/>
</dbReference>
<dbReference type="Pfam" id="PF03948">
    <property type="entry name" value="Ribosomal_L9_C"/>
    <property type="match status" value="1"/>
</dbReference>
<dbReference type="Pfam" id="PF01281">
    <property type="entry name" value="Ribosomal_L9_N"/>
    <property type="match status" value="1"/>
</dbReference>
<dbReference type="SUPFAM" id="SSF55658">
    <property type="entry name" value="L9 N-domain-like"/>
    <property type="match status" value="1"/>
</dbReference>
<dbReference type="SUPFAM" id="SSF55653">
    <property type="entry name" value="Ribosomal protein L9 C-domain"/>
    <property type="match status" value="1"/>
</dbReference>
<dbReference type="PROSITE" id="PS00651">
    <property type="entry name" value="RIBOSOMAL_L9"/>
    <property type="match status" value="1"/>
</dbReference>
<accession>B2T3N6</accession>
<organism>
    <name type="scientific">Paraburkholderia phytofirmans (strain DSM 17436 / LMG 22146 / PsJN)</name>
    <name type="common">Burkholderia phytofirmans</name>
    <dbReference type="NCBI Taxonomy" id="398527"/>
    <lineage>
        <taxon>Bacteria</taxon>
        <taxon>Pseudomonadati</taxon>
        <taxon>Pseudomonadota</taxon>
        <taxon>Betaproteobacteria</taxon>
        <taxon>Burkholderiales</taxon>
        <taxon>Burkholderiaceae</taxon>
        <taxon>Paraburkholderia</taxon>
    </lineage>
</organism>
<protein>
    <recommendedName>
        <fullName evidence="1">Large ribosomal subunit protein bL9</fullName>
    </recommendedName>
    <alternativeName>
        <fullName evidence="2">50S ribosomal protein L9</fullName>
    </alternativeName>
</protein>
<proteinExistence type="inferred from homology"/>
<evidence type="ECO:0000255" key="1">
    <source>
        <dbReference type="HAMAP-Rule" id="MF_00503"/>
    </source>
</evidence>
<evidence type="ECO:0000305" key="2"/>
<comment type="function">
    <text evidence="1">Binds to the 23S rRNA.</text>
</comment>
<comment type="similarity">
    <text evidence="1">Belongs to the bacterial ribosomal protein bL9 family.</text>
</comment>
<keyword id="KW-0687">Ribonucleoprotein</keyword>
<keyword id="KW-0689">Ribosomal protein</keyword>
<keyword id="KW-0694">RNA-binding</keyword>
<keyword id="KW-0699">rRNA-binding</keyword>
<reference key="1">
    <citation type="journal article" date="2011" name="J. Bacteriol.">
        <title>Complete genome sequence of the plant growth-promoting endophyte Burkholderia phytofirmans strain PsJN.</title>
        <authorList>
            <person name="Weilharter A."/>
            <person name="Mitter B."/>
            <person name="Shin M.V."/>
            <person name="Chain P.S."/>
            <person name="Nowak J."/>
            <person name="Sessitsch A."/>
        </authorList>
    </citation>
    <scope>NUCLEOTIDE SEQUENCE [LARGE SCALE GENOMIC DNA]</scope>
    <source>
        <strain>DSM 17436 / LMG 22146 / PsJN</strain>
    </source>
</reference>